<organism evidence="9">
    <name type="scientific">Trichophyton rubrum (strain ATCC MYA-4607 / CBS 118892)</name>
    <name type="common">Athlete's foot fungus</name>
    <dbReference type="NCBI Taxonomy" id="559305"/>
    <lineage>
        <taxon>Eukaryota</taxon>
        <taxon>Fungi</taxon>
        <taxon>Dikarya</taxon>
        <taxon>Ascomycota</taxon>
        <taxon>Pezizomycotina</taxon>
        <taxon>Eurotiomycetes</taxon>
        <taxon>Eurotiomycetidae</taxon>
        <taxon>Onygenales</taxon>
        <taxon>Arthrodermataceae</taxon>
        <taxon>Trichophyton</taxon>
    </lineage>
</organism>
<name>DHAS_TRIRC</name>
<dbReference type="EC" id="1.2.1.11" evidence="5"/>
<dbReference type="EMBL" id="GG700650">
    <property type="protein sequence ID" value="KFL61260.1"/>
    <property type="molecule type" value="Genomic_DNA"/>
</dbReference>
<dbReference type="RefSeq" id="XP_003236555.1">
    <property type="nucleotide sequence ID" value="XM_003236507.1"/>
</dbReference>
<dbReference type="PDB" id="4ZHS">
    <property type="method" value="X-ray"/>
    <property type="resolution" value="2.60 A"/>
    <property type="chains" value="A/B/C/D/E/F=1-359"/>
</dbReference>
<dbReference type="PDB" id="4ZIC">
    <property type="method" value="X-ray"/>
    <property type="resolution" value="2.55 A"/>
    <property type="chains" value="A/B/C/D/E/F=1-359"/>
</dbReference>
<dbReference type="PDBsum" id="4ZHS"/>
<dbReference type="PDBsum" id="4ZIC"/>
<dbReference type="SMR" id="A0A080WMA9"/>
<dbReference type="GeneID" id="10376617"/>
<dbReference type="VEuPathDB" id="FungiDB:TERG_03598"/>
<dbReference type="eggNOG" id="KOG4777">
    <property type="taxonomic scope" value="Eukaryota"/>
</dbReference>
<dbReference type="HOGENOM" id="CLU_049966_1_0_1"/>
<dbReference type="OrthoDB" id="1894490at2759"/>
<dbReference type="UniPathway" id="UPA00050">
    <property type="reaction ID" value="UER00463"/>
</dbReference>
<dbReference type="UniPathway" id="UPA00051">
    <property type="reaction ID" value="UER00464"/>
</dbReference>
<dbReference type="Proteomes" id="UP000008864">
    <property type="component" value="Unassembled WGS sequence"/>
</dbReference>
<dbReference type="GO" id="GO:0005829">
    <property type="term" value="C:cytosol"/>
    <property type="evidence" value="ECO:0007669"/>
    <property type="project" value="UniProtKB-SubCell"/>
</dbReference>
<dbReference type="GO" id="GO:0005634">
    <property type="term" value="C:nucleus"/>
    <property type="evidence" value="ECO:0007669"/>
    <property type="project" value="UniProtKB-SubCell"/>
</dbReference>
<dbReference type="GO" id="GO:0004073">
    <property type="term" value="F:aspartate-semialdehyde dehydrogenase activity"/>
    <property type="evidence" value="ECO:0000314"/>
    <property type="project" value="UniProtKB"/>
</dbReference>
<dbReference type="GO" id="GO:0051287">
    <property type="term" value="F:NAD binding"/>
    <property type="evidence" value="ECO:0007669"/>
    <property type="project" value="InterPro"/>
</dbReference>
<dbReference type="GO" id="GO:0050661">
    <property type="term" value="F:NADP binding"/>
    <property type="evidence" value="ECO:0007669"/>
    <property type="project" value="InterPro"/>
</dbReference>
<dbReference type="GO" id="GO:0046983">
    <property type="term" value="F:protein dimerization activity"/>
    <property type="evidence" value="ECO:0007669"/>
    <property type="project" value="InterPro"/>
</dbReference>
<dbReference type="GO" id="GO:0071266">
    <property type="term" value="P:'de novo' L-methionine biosynthetic process"/>
    <property type="evidence" value="ECO:0000314"/>
    <property type="project" value="UniProtKB"/>
</dbReference>
<dbReference type="GO" id="GO:0009089">
    <property type="term" value="P:lysine biosynthetic process via diaminopimelate"/>
    <property type="evidence" value="ECO:0007669"/>
    <property type="project" value="UniProtKB-UniPathway"/>
</dbReference>
<dbReference type="GO" id="GO:0009088">
    <property type="term" value="P:threonine biosynthetic process"/>
    <property type="evidence" value="ECO:0000314"/>
    <property type="project" value="UniProtKB"/>
</dbReference>
<dbReference type="CDD" id="cd18130">
    <property type="entry name" value="ASADH_C_arch_fung_like"/>
    <property type="match status" value="1"/>
</dbReference>
<dbReference type="CDD" id="cd02315">
    <property type="entry name" value="ScASADH_like_N"/>
    <property type="match status" value="1"/>
</dbReference>
<dbReference type="FunFam" id="3.40.50.720:FF:000200">
    <property type="entry name" value="Aspartate-semialdehyde dehydrogenase"/>
    <property type="match status" value="1"/>
</dbReference>
<dbReference type="FunFam" id="3.30.360.10:FF:000016">
    <property type="entry name" value="Probable aspartate-semialdehyde dehydrogenase"/>
    <property type="match status" value="1"/>
</dbReference>
<dbReference type="Gene3D" id="3.30.360.10">
    <property type="entry name" value="Dihydrodipicolinate Reductase, domain 2"/>
    <property type="match status" value="1"/>
</dbReference>
<dbReference type="Gene3D" id="3.40.50.720">
    <property type="entry name" value="NAD(P)-binding Rossmann-like Domain"/>
    <property type="match status" value="1"/>
</dbReference>
<dbReference type="InterPro" id="IPR051823">
    <property type="entry name" value="ASADH-related"/>
</dbReference>
<dbReference type="InterPro" id="IPR000319">
    <property type="entry name" value="Asp-semialdehyde_DH_CS"/>
</dbReference>
<dbReference type="InterPro" id="IPR005676">
    <property type="entry name" value="Asp_semi-ald_DH_pep-lack"/>
</dbReference>
<dbReference type="InterPro" id="IPR036291">
    <property type="entry name" value="NAD(P)-bd_dom_sf"/>
</dbReference>
<dbReference type="InterPro" id="IPR000534">
    <property type="entry name" value="Semialdehyde_DH_NAD-bd"/>
</dbReference>
<dbReference type="InterPro" id="IPR012280">
    <property type="entry name" value="Semialdhyde_DH_dimer_dom"/>
</dbReference>
<dbReference type="NCBIfam" id="TIGR00978">
    <property type="entry name" value="asd_EA"/>
    <property type="match status" value="1"/>
</dbReference>
<dbReference type="NCBIfam" id="NF006416">
    <property type="entry name" value="PRK08664.1"/>
    <property type="match status" value="1"/>
</dbReference>
<dbReference type="PANTHER" id="PTHR46718">
    <property type="entry name" value="ASPARTATE-SEMIALDEHYDE DEHYDROGENASE"/>
    <property type="match status" value="1"/>
</dbReference>
<dbReference type="PANTHER" id="PTHR46718:SF1">
    <property type="entry name" value="ASPARTATE-SEMIALDEHYDE DEHYDROGENASE"/>
    <property type="match status" value="1"/>
</dbReference>
<dbReference type="Pfam" id="PF01118">
    <property type="entry name" value="Semialdhyde_dh"/>
    <property type="match status" value="1"/>
</dbReference>
<dbReference type="Pfam" id="PF02774">
    <property type="entry name" value="Semialdhyde_dhC"/>
    <property type="match status" value="1"/>
</dbReference>
<dbReference type="PIRSF" id="PIRSF000148">
    <property type="entry name" value="ASA_dh"/>
    <property type="match status" value="1"/>
</dbReference>
<dbReference type="SMART" id="SM00859">
    <property type="entry name" value="Semialdhyde_dh"/>
    <property type="match status" value="1"/>
</dbReference>
<dbReference type="SUPFAM" id="SSF55347">
    <property type="entry name" value="Glyceraldehyde-3-phosphate dehydrogenase-like, C-terminal domain"/>
    <property type="match status" value="1"/>
</dbReference>
<dbReference type="SUPFAM" id="SSF51735">
    <property type="entry name" value="NAD(P)-binding Rossmann-fold domains"/>
    <property type="match status" value="1"/>
</dbReference>
<dbReference type="PROSITE" id="PS01103">
    <property type="entry name" value="ASD"/>
    <property type="match status" value="1"/>
</dbReference>
<comment type="function">
    <text evidence="5">Catalyzes the NADPH-dependent formation of L-aspartate 4-semialdehyde (L-ASA) by the reductive dephosphorylation of 4-phospho-L-aspartate (PubMed:26869335). Mediates the second step in the biosynthesis of amino acids that derive from aspartate (the aspartate family of amino acids), including methioinine and threonine, the latter of which is a precursor to isoleucine (PubMed:26869335).</text>
</comment>
<comment type="catalytic activity">
    <reaction evidence="5">
        <text>L-aspartate 4-semialdehyde + phosphate + NADP(+) = 4-phospho-L-aspartate + NADPH + H(+)</text>
        <dbReference type="Rhea" id="RHEA:24284"/>
        <dbReference type="ChEBI" id="CHEBI:15378"/>
        <dbReference type="ChEBI" id="CHEBI:43474"/>
        <dbReference type="ChEBI" id="CHEBI:57535"/>
        <dbReference type="ChEBI" id="CHEBI:57783"/>
        <dbReference type="ChEBI" id="CHEBI:58349"/>
        <dbReference type="ChEBI" id="CHEBI:537519"/>
        <dbReference type="EC" id="1.2.1.11"/>
    </reaction>
    <physiologicalReaction direction="right-to-left" evidence="5">
        <dbReference type="Rhea" id="RHEA:24286"/>
    </physiologicalReaction>
</comment>
<comment type="biophysicochemical properties">
    <kinetics>
        <text evidence="5">kcat is 16.5 sec(-1) with L-aspartate 4-semialdehyde as substrate in the reverse direction (at 25 degrees Celsius and at pH 8.6).</text>
    </kinetics>
</comment>
<comment type="pathway">
    <text evidence="5">Amino-acid biosynthesis; L-methionine biosynthesis via de novo pathway; L-homoserine from L-aspartate: step 2/3.</text>
</comment>
<comment type="pathway">
    <text evidence="5">Amino-acid biosynthesis; L-threonine biosynthesis; L-threonine from L-aspartate: step 2/5.</text>
</comment>
<comment type="subunit">
    <text evidence="5">Homotetramer; dimer of dimers.</text>
</comment>
<comment type="subcellular location">
    <subcellularLocation>
        <location evidence="2">Cytoplasm</location>
        <location evidence="2">Cytosol</location>
    </subcellularLocation>
    <subcellularLocation>
        <location evidence="2">Nucleus</location>
    </subcellularLocation>
</comment>
<comment type="similarity">
    <text evidence="7">Belongs to the aspartate-semialdehyde dehydrogenase family.</text>
</comment>
<reference evidence="9" key="1">
    <citation type="journal article" date="2012" name="MBio">
        <title>Comparative genome analysis of Trichophyton rubrum and related dermatophytes reveals candidate genes involved in infection.</title>
        <authorList>
            <person name="Martinez D.A."/>
            <person name="Oliver B.G."/>
            <person name="Graeser Y."/>
            <person name="Goldberg J.M."/>
            <person name="Li W."/>
            <person name="Martinez-Rossi N.M."/>
            <person name="Monod M."/>
            <person name="Shelest E."/>
            <person name="Barton R.C."/>
            <person name="Birch E."/>
            <person name="Brakhage A.A."/>
            <person name="Chen Z."/>
            <person name="Gurr S.J."/>
            <person name="Heiman D."/>
            <person name="Heitman J."/>
            <person name="Kosti I."/>
            <person name="Rossi A."/>
            <person name="Saif S."/>
            <person name="Samalova M."/>
            <person name="Saunders C.W."/>
            <person name="Shea T."/>
            <person name="Summerbell R.C."/>
            <person name="Xu J."/>
            <person name="Young S."/>
            <person name="Zeng Q."/>
            <person name="Birren B.W."/>
            <person name="Cuomo C.A."/>
            <person name="White T.C."/>
        </authorList>
    </citation>
    <scope>NUCLEOTIDE SEQUENCE [LARGE SCALE GENOMIC DNA]</scope>
    <source>
        <strain evidence="9">ATCC MYA-4607 / CBS 118892</strain>
    </source>
</reference>
<reference evidence="10 11" key="2">
    <citation type="journal article" date="2016" name="Sci. Rep.">
        <title>Structural Insights into the Tetrameric State of Aspartate-beta-semialdehyde Dehydrogenases from Fungal Species.</title>
        <authorList>
            <person name="Li Q."/>
            <person name="Mu Z."/>
            <person name="Zhao R."/>
            <person name="Dahal G."/>
            <person name="Viola R.E."/>
            <person name="Liu T."/>
            <person name="Jin Q."/>
            <person name="Cui S."/>
        </authorList>
    </citation>
    <scope>X-RAY CRYSTALLOGRAPHY (2.55 ANGSTROMS) IN COMPLEX WITH NADP(+)</scope>
    <scope>FUNCTION</scope>
    <scope>CATALYTIC ACTIVITY</scope>
    <scope>BIOPHYSICOCHEMICAL PROPERTIES</scope>
    <scope>PATHWAY</scope>
    <scope>SUBUNIT</scope>
    <scope>MUTAGENESIS OF 196-ASP--PHE-198 AND ARG-309</scope>
    <source>
        <strain evidence="6">BMU01672</strain>
    </source>
</reference>
<accession>A0A080WMA9</accession>
<accession>A0A140UHG6</accession>
<evidence type="ECO:0000250" key="1">
    <source>
        <dbReference type="UniProtKB" id="A0A179UL48"/>
    </source>
</evidence>
<evidence type="ECO:0000250" key="2">
    <source>
        <dbReference type="UniProtKB" id="P13663"/>
    </source>
</evidence>
<evidence type="ECO:0000250" key="3">
    <source>
        <dbReference type="UniProtKB" id="Q5ALM0"/>
    </source>
</evidence>
<evidence type="ECO:0000255" key="4">
    <source>
        <dbReference type="PIRSR" id="PIRSR000148-1"/>
    </source>
</evidence>
<evidence type="ECO:0000269" key="5">
    <source>
    </source>
</evidence>
<evidence type="ECO:0000303" key="6">
    <source>
    </source>
</evidence>
<evidence type="ECO:0000305" key="7"/>
<evidence type="ECO:0000312" key="8">
    <source>
        <dbReference type="EMBL" id="KFL61260.1"/>
    </source>
</evidence>
<evidence type="ECO:0000312" key="9">
    <source>
        <dbReference type="Proteomes" id="UP000008864"/>
    </source>
</evidence>
<evidence type="ECO:0007744" key="10">
    <source>
        <dbReference type="PDB" id="4ZHS"/>
    </source>
</evidence>
<evidence type="ECO:0007744" key="11">
    <source>
        <dbReference type="PDB" id="4ZIC"/>
    </source>
</evidence>
<evidence type="ECO:0007829" key="12">
    <source>
        <dbReference type="PDB" id="4ZHS"/>
    </source>
</evidence>
<evidence type="ECO:0007829" key="13">
    <source>
        <dbReference type="PDB" id="4ZIC"/>
    </source>
</evidence>
<sequence length="362" mass="38742">MATPSKKRCGVLGATGAVGTRFILLLSQHPLLELVAVGASDRSSGKKYRDAVRWKQSAPMPAKVADLTVRCCDPAEFSDCDIIFSGLDPDAAGEIEMAFLKANFAVFSNAKNYRLDPMVPLVVPLVNAGHIDVIPAQRKHFGLDKGMLVCNSNCAVVGLVVPAKALIQKFGPIESVSMVTMQAVSGAGYPGVSSMDIFDNIVPYIPGEEGKISSEARKILGDLNSDLAGFSDQKPLQISVACNRVPVLDGHTVCASLRFVNRPPPTASQVREALREYKPEVQTLGCPSAPKMSIHVMDEVDRPQPRLDRETEGGYACTVGRIREDDSDVFDIQFVALSHNTVLGASGSSILNAESAILKGFV</sequence>
<keyword id="KW-0002">3D-structure</keyword>
<keyword id="KW-0028">Amino-acid biosynthesis</keyword>
<keyword id="KW-0963">Cytoplasm</keyword>
<keyword id="KW-0486">Methionine biosynthesis</keyword>
<keyword id="KW-0521">NADP</keyword>
<keyword id="KW-0539">Nucleus</keyword>
<keyword id="KW-0560">Oxidoreductase</keyword>
<keyword id="KW-1185">Reference proteome</keyword>
<keyword id="KW-0791">Threonine biosynthesis</keyword>
<feature type="chain" id="PRO_0000461592" description="Aspartate-semialdehyde dehydrogenase">
    <location>
        <begin position="1"/>
        <end position="362"/>
    </location>
</feature>
<feature type="active site" description="Acyl-thioester intermediate" evidence="4">
    <location>
        <position position="154"/>
    </location>
</feature>
<feature type="active site" description="Proton acceptor" evidence="4">
    <location>
        <position position="251"/>
    </location>
</feature>
<feature type="binding site" evidence="5 11">
    <location>
        <position position="15"/>
    </location>
    <ligand>
        <name>NADP(+)</name>
        <dbReference type="ChEBI" id="CHEBI:58349"/>
    </ligand>
</feature>
<feature type="binding site" evidence="3">
    <location>
        <position position="16"/>
    </location>
    <ligand>
        <name>NADP(+)</name>
        <dbReference type="ChEBI" id="CHEBI:58349"/>
    </ligand>
</feature>
<feature type="binding site" evidence="1">
    <location>
        <position position="17"/>
    </location>
    <ligand>
        <name>NADP(+)</name>
        <dbReference type="ChEBI" id="CHEBI:58349"/>
    </ligand>
</feature>
<feature type="binding site" evidence="1">
    <location>
        <position position="18"/>
    </location>
    <ligand>
        <name>NADP(+)</name>
        <dbReference type="ChEBI" id="CHEBI:58349"/>
    </ligand>
</feature>
<feature type="binding site" evidence="5 11">
    <location>
        <position position="40"/>
    </location>
    <ligand>
        <name>NADP(+)</name>
        <dbReference type="ChEBI" id="CHEBI:58349"/>
    </ligand>
</feature>
<feature type="binding site" evidence="3">
    <location>
        <position position="43"/>
    </location>
    <ligand>
        <name>NADP(+)</name>
        <dbReference type="ChEBI" id="CHEBI:58349"/>
    </ligand>
</feature>
<feature type="binding site" evidence="5 11">
    <location>
        <position position="87"/>
    </location>
    <ligand>
        <name>NADP(+)</name>
        <dbReference type="ChEBI" id="CHEBI:58349"/>
    </ligand>
</feature>
<feature type="binding site" evidence="5 11">
    <location>
        <position position="88"/>
    </location>
    <ligand>
        <name>NADP(+)</name>
        <dbReference type="ChEBI" id="CHEBI:58349"/>
    </ligand>
</feature>
<feature type="binding site" evidence="5 11">
    <location>
        <position position="186"/>
    </location>
    <ligand>
        <name>NADP(+)</name>
        <dbReference type="ChEBI" id="CHEBI:58349"/>
    </ligand>
</feature>
<feature type="binding site" evidence="1">
    <location>
        <position position="340"/>
    </location>
    <ligand>
        <name>NADP(+)</name>
        <dbReference type="ChEBI" id="CHEBI:58349"/>
    </ligand>
</feature>
<feature type="mutagenesis site" description="Leads to abnormal protein folding, disrupts tetramerization of dimers and almost completely abolishes catalytic activity; when associated with A-309." evidence="5">
    <original>DIF</original>
    <variation>AIA</variation>
    <location>
        <begin position="196"/>
        <end position="198"/>
    </location>
</feature>
<feature type="mutagenesis site" description="Leads to abnormal protein folding, disrupts tetramerization of dimers and almost completely abolishes catalytic activity; when associated with 196-A--A-198." evidence="5">
    <original>R</original>
    <variation>A</variation>
    <location>
        <position position="309"/>
    </location>
</feature>
<feature type="strand" evidence="13">
    <location>
        <begin position="7"/>
        <end position="13"/>
    </location>
</feature>
<feature type="helix" evidence="13">
    <location>
        <begin position="17"/>
        <end position="25"/>
    </location>
</feature>
<feature type="turn" evidence="13">
    <location>
        <begin position="26"/>
        <end position="28"/>
    </location>
</feature>
<feature type="strand" evidence="13">
    <location>
        <begin position="30"/>
        <end position="38"/>
    </location>
</feature>
<feature type="turn" evidence="13">
    <location>
        <begin position="48"/>
        <end position="50"/>
    </location>
</feature>
<feature type="strand" evidence="12">
    <location>
        <begin position="56"/>
        <end position="58"/>
    </location>
</feature>
<feature type="helix" evidence="13">
    <location>
        <begin position="62"/>
        <end position="66"/>
    </location>
</feature>
<feature type="strand" evidence="12">
    <location>
        <begin position="70"/>
        <end position="72"/>
    </location>
</feature>
<feature type="helix" evidence="13">
    <location>
        <begin position="74"/>
        <end position="77"/>
    </location>
</feature>
<feature type="strand" evidence="13">
    <location>
        <begin position="81"/>
        <end position="85"/>
    </location>
</feature>
<feature type="helix" evidence="13">
    <location>
        <begin position="89"/>
        <end position="100"/>
    </location>
</feature>
<feature type="turn" evidence="13">
    <location>
        <begin position="101"/>
        <end position="103"/>
    </location>
</feature>
<feature type="strand" evidence="13">
    <location>
        <begin position="105"/>
        <end position="108"/>
    </location>
</feature>
<feature type="turn" evidence="13">
    <location>
        <begin position="112"/>
        <end position="115"/>
    </location>
</feature>
<feature type="turn" evidence="13">
    <location>
        <begin position="124"/>
        <end position="126"/>
    </location>
</feature>
<feature type="helix" evidence="13">
    <location>
        <begin position="128"/>
        <end position="133"/>
    </location>
</feature>
<feature type="helix" evidence="13">
    <location>
        <begin position="134"/>
        <end position="141"/>
    </location>
</feature>
<feature type="strand" evidence="13">
    <location>
        <begin position="147"/>
        <end position="150"/>
    </location>
</feature>
<feature type="turn" evidence="13">
    <location>
        <begin position="154"/>
        <end position="156"/>
    </location>
</feature>
<feature type="helix" evidence="13">
    <location>
        <begin position="157"/>
        <end position="170"/>
    </location>
</feature>
<feature type="strand" evidence="13">
    <location>
        <begin position="173"/>
        <end position="182"/>
    </location>
</feature>
<feature type="helix" evidence="13">
    <location>
        <begin position="194"/>
        <end position="197"/>
    </location>
</feature>
<feature type="helix" evidence="13">
    <location>
        <begin position="208"/>
        <end position="219"/>
    </location>
</feature>
<feature type="strand" evidence="13">
    <location>
        <begin position="221"/>
        <end position="223"/>
    </location>
</feature>
<feature type="strand" evidence="13">
    <location>
        <begin position="227"/>
        <end position="231"/>
    </location>
</feature>
<feature type="strand" evidence="13">
    <location>
        <begin position="237"/>
        <end position="241"/>
    </location>
</feature>
<feature type="strand" evidence="13">
    <location>
        <begin position="251"/>
        <end position="263"/>
    </location>
</feature>
<feature type="helix" evidence="13">
    <location>
        <begin position="267"/>
        <end position="276"/>
    </location>
</feature>
<feature type="helix" evidence="13">
    <location>
        <begin position="280"/>
        <end position="283"/>
    </location>
</feature>
<feature type="strand" evidence="12">
    <location>
        <begin position="287"/>
        <end position="289"/>
    </location>
</feature>
<feature type="strand" evidence="13">
    <location>
        <begin position="291"/>
        <end position="297"/>
    </location>
</feature>
<feature type="helix" evidence="13">
    <location>
        <begin position="305"/>
        <end position="308"/>
    </location>
</feature>
<feature type="helix" evidence="13">
    <location>
        <begin position="311"/>
        <end position="314"/>
    </location>
</feature>
<feature type="strand" evidence="13">
    <location>
        <begin position="317"/>
        <end position="324"/>
    </location>
</feature>
<feature type="strand" evidence="13">
    <location>
        <begin position="328"/>
        <end position="338"/>
    </location>
</feature>
<feature type="turn" evidence="13">
    <location>
        <begin position="340"/>
        <end position="344"/>
    </location>
</feature>
<feature type="helix" evidence="13">
    <location>
        <begin position="346"/>
        <end position="358"/>
    </location>
</feature>
<gene>
    <name evidence="8" type="ORF">TERG_03598</name>
</gene>
<proteinExistence type="evidence at protein level"/>
<protein>
    <recommendedName>
        <fullName evidence="7">Aspartate-semialdehyde dehydrogenase</fullName>
        <ecNumber evidence="5">1.2.1.11</ecNumber>
    </recommendedName>
    <alternativeName>
        <fullName evidence="6">TrASADH</fullName>
    </alternativeName>
</protein>